<name>MYBS2_ORYSJ</name>
<reference key="1">
    <citation type="journal article" date="2003" name="Science">
        <title>In-depth view of structure, activity, and evolution of rice chromosome 10.</title>
        <authorList>
            <person name="Yu Y."/>
            <person name="Rambo T."/>
            <person name="Currie J."/>
            <person name="Saski C."/>
            <person name="Kim H.-R."/>
            <person name="Collura K."/>
            <person name="Thompson S."/>
            <person name="Simmons J."/>
            <person name="Yang T.-J."/>
            <person name="Nah G."/>
            <person name="Patel A.J."/>
            <person name="Thurmond S."/>
            <person name="Henry D."/>
            <person name="Oates R."/>
            <person name="Palmer M."/>
            <person name="Pries G."/>
            <person name="Gibson J."/>
            <person name="Anderson H."/>
            <person name="Paradkar M."/>
            <person name="Crane L."/>
            <person name="Dale J."/>
            <person name="Carver M.B."/>
            <person name="Wood T."/>
            <person name="Frisch D."/>
            <person name="Engler F."/>
            <person name="Soderlund C."/>
            <person name="Palmer L.E."/>
            <person name="Teytelman L."/>
            <person name="Nascimento L."/>
            <person name="De la Bastide M."/>
            <person name="Spiegel L."/>
            <person name="Ware D."/>
            <person name="O'Shaughnessy A."/>
            <person name="Dike S."/>
            <person name="Dedhia N."/>
            <person name="Preston R."/>
            <person name="Huang E."/>
            <person name="Ferraro K."/>
            <person name="Kuit K."/>
            <person name="Miller B."/>
            <person name="Zutavern T."/>
            <person name="Katzenberger F."/>
            <person name="Muller S."/>
            <person name="Balija V."/>
            <person name="Martienssen R.A."/>
            <person name="Stein L."/>
            <person name="Minx P."/>
            <person name="Johnson D."/>
            <person name="Cordum H."/>
            <person name="Mardis E."/>
            <person name="Cheng Z."/>
            <person name="Jiang J."/>
            <person name="Wilson R."/>
            <person name="McCombie W.R."/>
            <person name="Wing R.A."/>
            <person name="Yuan Q."/>
            <person name="Ouyang S."/>
            <person name="Liu J."/>
            <person name="Jones K.M."/>
            <person name="Gansberger K."/>
            <person name="Moffat K."/>
            <person name="Hill J."/>
            <person name="Tsitrin T."/>
            <person name="Overton L."/>
            <person name="Bera J."/>
            <person name="Kim M."/>
            <person name="Jin S."/>
            <person name="Tallon L."/>
            <person name="Ciecko A."/>
            <person name="Pai G."/>
            <person name="Van Aken S."/>
            <person name="Utterback T."/>
            <person name="Reidmuller S."/>
            <person name="Bormann J."/>
            <person name="Feldblyum T."/>
            <person name="Hsiao J."/>
            <person name="Zismann V."/>
            <person name="Blunt S."/>
            <person name="de Vazeille A.R."/>
            <person name="Shaffer T."/>
            <person name="Koo H."/>
            <person name="Suh B."/>
            <person name="Yang Q."/>
            <person name="Haas B."/>
            <person name="Peterson J."/>
            <person name="Pertea M."/>
            <person name="Volfovsky N."/>
            <person name="Wortman J."/>
            <person name="White O."/>
            <person name="Salzberg S.L."/>
            <person name="Fraser C.M."/>
            <person name="Buell C.R."/>
            <person name="Messing J."/>
            <person name="Song R."/>
            <person name="Fuks G."/>
            <person name="Llaca V."/>
            <person name="Kovchak S."/>
            <person name="Young S."/>
            <person name="Bowers J.E."/>
            <person name="Paterson A.H."/>
            <person name="Johns M.A."/>
            <person name="Mao L."/>
            <person name="Pan H."/>
            <person name="Dean R.A."/>
        </authorList>
    </citation>
    <scope>NUCLEOTIDE SEQUENCE [LARGE SCALE GENOMIC DNA]</scope>
    <source>
        <strain>cv. Nipponbare</strain>
    </source>
</reference>
<reference key="2">
    <citation type="journal article" date="2005" name="Nature">
        <title>The map-based sequence of the rice genome.</title>
        <authorList>
            <consortium name="International rice genome sequencing project (IRGSP)"/>
        </authorList>
    </citation>
    <scope>NUCLEOTIDE SEQUENCE [LARGE SCALE GENOMIC DNA]</scope>
    <source>
        <strain>cv. Nipponbare</strain>
    </source>
</reference>
<reference key="3">
    <citation type="journal article" date="2008" name="Nucleic Acids Res.">
        <title>The rice annotation project database (RAP-DB): 2008 update.</title>
        <authorList>
            <consortium name="The rice annotation project (RAP)"/>
        </authorList>
    </citation>
    <scope>GENOME REANNOTATION</scope>
    <source>
        <strain>cv. Nipponbare</strain>
    </source>
</reference>
<reference key="4">
    <citation type="journal article" date="2013" name="Rice">
        <title>Improvement of the Oryza sativa Nipponbare reference genome using next generation sequence and optical map data.</title>
        <authorList>
            <person name="Kawahara Y."/>
            <person name="de la Bastide M."/>
            <person name="Hamilton J.P."/>
            <person name="Kanamori H."/>
            <person name="McCombie W.R."/>
            <person name="Ouyang S."/>
            <person name="Schwartz D.C."/>
            <person name="Tanaka T."/>
            <person name="Wu J."/>
            <person name="Zhou S."/>
            <person name="Childs K.L."/>
            <person name="Davidson R.M."/>
            <person name="Lin H."/>
            <person name="Quesada-Ocampo L."/>
            <person name="Vaillancourt B."/>
            <person name="Sakai H."/>
            <person name="Lee S.S."/>
            <person name="Kim J."/>
            <person name="Numa H."/>
            <person name="Itoh T."/>
            <person name="Buell C.R."/>
            <person name="Matsumoto T."/>
        </authorList>
    </citation>
    <scope>GENOME REANNOTATION</scope>
    <source>
        <strain>cv. Nipponbare</strain>
    </source>
</reference>
<reference key="5">
    <citation type="journal article" date="2005" name="PLoS Biol.">
        <title>The genomes of Oryza sativa: a history of duplications.</title>
        <authorList>
            <person name="Yu J."/>
            <person name="Wang J."/>
            <person name="Lin W."/>
            <person name="Li S."/>
            <person name="Li H."/>
            <person name="Zhou J."/>
            <person name="Ni P."/>
            <person name="Dong W."/>
            <person name="Hu S."/>
            <person name="Zeng C."/>
            <person name="Zhang J."/>
            <person name="Zhang Y."/>
            <person name="Li R."/>
            <person name="Xu Z."/>
            <person name="Li S."/>
            <person name="Li X."/>
            <person name="Zheng H."/>
            <person name="Cong L."/>
            <person name="Lin L."/>
            <person name="Yin J."/>
            <person name="Geng J."/>
            <person name="Li G."/>
            <person name="Shi J."/>
            <person name="Liu J."/>
            <person name="Lv H."/>
            <person name="Li J."/>
            <person name="Wang J."/>
            <person name="Deng Y."/>
            <person name="Ran L."/>
            <person name="Shi X."/>
            <person name="Wang X."/>
            <person name="Wu Q."/>
            <person name="Li C."/>
            <person name="Ren X."/>
            <person name="Wang J."/>
            <person name="Wang X."/>
            <person name="Li D."/>
            <person name="Liu D."/>
            <person name="Zhang X."/>
            <person name="Ji Z."/>
            <person name="Zhao W."/>
            <person name="Sun Y."/>
            <person name="Zhang Z."/>
            <person name="Bao J."/>
            <person name="Han Y."/>
            <person name="Dong L."/>
            <person name="Ji J."/>
            <person name="Chen P."/>
            <person name="Wu S."/>
            <person name="Liu J."/>
            <person name="Xiao Y."/>
            <person name="Bu D."/>
            <person name="Tan J."/>
            <person name="Yang L."/>
            <person name="Ye C."/>
            <person name="Zhang J."/>
            <person name="Xu J."/>
            <person name="Zhou Y."/>
            <person name="Yu Y."/>
            <person name="Zhang B."/>
            <person name="Zhuang S."/>
            <person name="Wei H."/>
            <person name="Liu B."/>
            <person name="Lei M."/>
            <person name="Yu H."/>
            <person name="Li Y."/>
            <person name="Xu H."/>
            <person name="Wei S."/>
            <person name="He X."/>
            <person name="Fang L."/>
            <person name="Zhang Z."/>
            <person name="Zhang Y."/>
            <person name="Huang X."/>
            <person name="Su Z."/>
            <person name="Tong W."/>
            <person name="Li J."/>
            <person name="Tong Z."/>
            <person name="Li S."/>
            <person name="Ye J."/>
            <person name="Wang L."/>
            <person name="Fang L."/>
            <person name="Lei T."/>
            <person name="Chen C.-S."/>
            <person name="Chen H.-C."/>
            <person name="Xu Z."/>
            <person name="Li H."/>
            <person name="Huang H."/>
            <person name="Zhang F."/>
            <person name="Xu H."/>
            <person name="Li N."/>
            <person name="Zhao C."/>
            <person name="Li S."/>
            <person name="Dong L."/>
            <person name="Huang Y."/>
            <person name="Li L."/>
            <person name="Xi Y."/>
            <person name="Qi Q."/>
            <person name="Li W."/>
            <person name="Zhang B."/>
            <person name="Hu W."/>
            <person name="Zhang Y."/>
            <person name="Tian X."/>
            <person name="Jiao Y."/>
            <person name="Liang X."/>
            <person name="Jin J."/>
            <person name="Gao L."/>
            <person name="Zheng W."/>
            <person name="Hao B."/>
            <person name="Liu S.-M."/>
            <person name="Wang W."/>
            <person name="Yuan L."/>
            <person name="Cao M."/>
            <person name="McDermott J."/>
            <person name="Samudrala R."/>
            <person name="Wang J."/>
            <person name="Wong G.K.-S."/>
            <person name="Yang H."/>
        </authorList>
    </citation>
    <scope>NUCLEOTIDE SEQUENCE [LARGE SCALE GENOMIC DNA]</scope>
    <source>
        <strain>cv. Nipponbare</strain>
    </source>
</reference>
<reference key="6">
    <citation type="journal article" date="2002" name="Plant Cell">
        <title>Three novel MYB proteins with one DNA binding repeat mediate sugar and hormone regulation of alpha-amylase gene expression.</title>
        <authorList>
            <person name="Lu C.-A."/>
            <person name="Ho T.-H."/>
            <person name="Ho S.-L."/>
            <person name="Yu S.-M."/>
        </authorList>
    </citation>
    <scope>NUCLEOTIDE SEQUENCE [MRNA] OF 33-265</scope>
    <scope>FUNCTION</scope>
    <scope>TISSUE SPECIFICITY</scope>
    <scope>INDUCTION BY SUCROSE AND GIBBERELLIC ACID</scope>
</reference>
<accession>Q7XC51</accession>
<accession>Q8H1D1</accession>
<accession>Q9AUS7</accession>
<dbReference type="EMBL" id="AC079890">
    <property type="protein sequence ID" value="AAK31272.1"/>
    <property type="molecule type" value="Genomic_DNA"/>
</dbReference>
<dbReference type="EMBL" id="DP000086">
    <property type="protein sequence ID" value="AAP55023.1"/>
    <property type="molecule type" value="Genomic_DNA"/>
</dbReference>
<dbReference type="EMBL" id="AP008216">
    <property type="protein sequence ID" value="BAF27229.1"/>
    <property type="molecule type" value="Genomic_DNA"/>
</dbReference>
<dbReference type="EMBL" id="AP014966">
    <property type="protein sequence ID" value="BAT12069.1"/>
    <property type="molecule type" value="Genomic_DNA"/>
</dbReference>
<dbReference type="EMBL" id="CM000147">
    <property type="protein sequence ID" value="EAZ16983.1"/>
    <property type="molecule type" value="Genomic_DNA"/>
</dbReference>
<dbReference type="EMBL" id="AY151043">
    <property type="protein sequence ID" value="AAN63153.1"/>
    <property type="status" value="ALT_FRAME"/>
    <property type="molecule type" value="mRNA"/>
</dbReference>
<dbReference type="RefSeq" id="NP_001391286.1">
    <property type="nucleotide sequence ID" value="NM_001404357.1"/>
</dbReference>
<dbReference type="RefSeq" id="XP_015612867.1">
    <property type="nucleotide sequence ID" value="XM_015757381.1"/>
</dbReference>
<dbReference type="SMR" id="Q7XC51"/>
<dbReference type="FunCoup" id="Q7XC51">
    <property type="interactions" value="15"/>
</dbReference>
<dbReference type="STRING" id="39947.Q7XC51"/>
<dbReference type="PaxDb" id="39947-Q7XC51"/>
<dbReference type="EnsemblPlants" id="Os10t0562100-01">
    <property type="protein sequence ID" value="Os10t0562100-01"/>
    <property type="gene ID" value="Os10g0562100"/>
</dbReference>
<dbReference type="GeneID" id="4349391"/>
<dbReference type="Gramene" id="Os10t0562100-01">
    <property type="protein sequence ID" value="Os10t0562100-01"/>
    <property type="gene ID" value="Os10g0562100"/>
</dbReference>
<dbReference type="KEGG" id="dosa:Os10g0562100"/>
<dbReference type="eggNOG" id="ENOG502RYHB">
    <property type="taxonomic scope" value="Eukaryota"/>
</dbReference>
<dbReference type="HOGENOM" id="CLU_038424_5_1_1"/>
<dbReference type="InParanoid" id="Q7XC51"/>
<dbReference type="OMA" id="PVMFRLF"/>
<dbReference type="OrthoDB" id="118550at2759"/>
<dbReference type="Proteomes" id="UP000000763">
    <property type="component" value="Chromosome 10"/>
</dbReference>
<dbReference type="Proteomes" id="UP000007752">
    <property type="component" value="Chromosome 10"/>
</dbReference>
<dbReference type="Proteomes" id="UP000059680">
    <property type="component" value="Chromosome 10"/>
</dbReference>
<dbReference type="ExpressionAtlas" id="Q7XC51">
    <property type="expression patterns" value="baseline and differential"/>
</dbReference>
<dbReference type="GO" id="GO:0005634">
    <property type="term" value="C:nucleus"/>
    <property type="evidence" value="ECO:0007669"/>
    <property type="project" value="UniProtKB-SubCell"/>
</dbReference>
<dbReference type="GO" id="GO:0003677">
    <property type="term" value="F:DNA binding"/>
    <property type="evidence" value="ECO:0007669"/>
    <property type="project" value="UniProtKB-KW"/>
</dbReference>
<dbReference type="GO" id="GO:0003700">
    <property type="term" value="F:DNA-binding transcription factor activity"/>
    <property type="evidence" value="ECO:0000314"/>
    <property type="project" value="UniProtKB"/>
</dbReference>
<dbReference type="GO" id="GO:0045893">
    <property type="term" value="P:positive regulation of DNA-templated transcription"/>
    <property type="evidence" value="ECO:0000314"/>
    <property type="project" value="UniProtKB"/>
</dbReference>
<dbReference type="GO" id="GO:0009723">
    <property type="term" value="P:response to ethylene"/>
    <property type="evidence" value="ECO:0000318"/>
    <property type="project" value="GO_Central"/>
</dbReference>
<dbReference type="GO" id="GO:0009739">
    <property type="term" value="P:response to gibberellin"/>
    <property type="evidence" value="ECO:0000270"/>
    <property type="project" value="UniProtKB"/>
</dbReference>
<dbReference type="GO" id="GO:0009744">
    <property type="term" value="P:response to sucrose"/>
    <property type="evidence" value="ECO:0000270"/>
    <property type="project" value="UniProtKB"/>
</dbReference>
<dbReference type="CDD" id="cd00167">
    <property type="entry name" value="SANT"/>
    <property type="match status" value="1"/>
</dbReference>
<dbReference type="FunFam" id="1.10.10.60:FF:000009">
    <property type="entry name" value="transcription factor MYB1R1"/>
    <property type="match status" value="1"/>
</dbReference>
<dbReference type="Gene3D" id="1.10.10.60">
    <property type="entry name" value="Homeodomain-like"/>
    <property type="match status" value="1"/>
</dbReference>
<dbReference type="InterPro" id="IPR009057">
    <property type="entry name" value="Homeodomain-like_sf"/>
</dbReference>
<dbReference type="InterPro" id="IPR017930">
    <property type="entry name" value="Myb_dom"/>
</dbReference>
<dbReference type="InterPro" id="IPR006447">
    <property type="entry name" value="Myb_dom_plants"/>
</dbReference>
<dbReference type="InterPro" id="IPR052245">
    <property type="entry name" value="Plant_Stress_Dev_TF"/>
</dbReference>
<dbReference type="InterPro" id="IPR001005">
    <property type="entry name" value="SANT/Myb"/>
</dbReference>
<dbReference type="InterPro" id="IPR017884">
    <property type="entry name" value="SANT_dom"/>
</dbReference>
<dbReference type="NCBIfam" id="TIGR01557">
    <property type="entry name" value="myb_SHAQKYF"/>
    <property type="match status" value="1"/>
</dbReference>
<dbReference type="PANTHER" id="PTHR44191">
    <property type="entry name" value="TRANSCRIPTION FACTOR KUA1"/>
    <property type="match status" value="1"/>
</dbReference>
<dbReference type="PANTHER" id="PTHR44191:SF70">
    <property type="entry name" value="TRANSCRIPTION FACTOR MYBS2"/>
    <property type="match status" value="1"/>
</dbReference>
<dbReference type="Pfam" id="PF00249">
    <property type="entry name" value="Myb_DNA-binding"/>
    <property type="match status" value="1"/>
</dbReference>
<dbReference type="SMART" id="SM00717">
    <property type="entry name" value="SANT"/>
    <property type="match status" value="1"/>
</dbReference>
<dbReference type="SUPFAM" id="SSF46689">
    <property type="entry name" value="Homeodomain-like"/>
    <property type="match status" value="1"/>
</dbReference>
<dbReference type="PROSITE" id="PS51294">
    <property type="entry name" value="HTH_MYB"/>
    <property type="match status" value="1"/>
</dbReference>
<feature type="chain" id="PRO_0000439175" description="Transcription factor MYBS2">
    <location>
        <begin position="1"/>
        <end position="265"/>
    </location>
</feature>
<feature type="domain" description="HTH myb-type" evidence="1">
    <location>
        <begin position="93"/>
        <end position="149"/>
    </location>
</feature>
<feature type="DNA-binding region" description="H-T-H motif" evidence="1">
    <location>
        <begin position="121"/>
        <end position="145"/>
    </location>
</feature>
<feature type="region of interest" description="Disordered" evidence="3">
    <location>
        <begin position="29"/>
        <end position="101"/>
    </location>
</feature>
<feature type="short sequence motif" description="Nuclear localization signal" evidence="2">
    <location>
        <begin position="71"/>
        <end position="78"/>
    </location>
</feature>
<feature type="compositionally biased region" description="Acidic residues" evidence="3">
    <location>
        <begin position="32"/>
        <end position="43"/>
    </location>
</feature>
<feature type="compositionally biased region" description="Polar residues" evidence="3">
    <location>
        <begin position="50"/>
        <end position="59"/>
    </location>
</feature>
<feature type="compositionally biased region" description="Basic residues" evidence="3">
    <location>
        <begin position="85"/>
        <end position="94"/>
    </location>
</feature>
<organism>
    <name type="scientific">Oryza sativa subsp. japonica</name>
    <name type="common">Rice</name>
    <dbReference type="NCBI Taxonomy" id="39947"/>
    <lineage>
        <taxon>Eukaryota</taxon>
        <taxon>Viridiplantae</taxon>
        <taxon>Streptophyta</taxon>
        <taxon>Embryophyta</taxon>
        <taxon>Tracheophyta</taxon>
        <taxon>Spermatophyta</taxon>
        <taxon>Magnoliopsida</taxon>
        <taxon>Liliopsida</taxon>
        <taxon>Poales</taxon>
        <taxon>Poaceae</taxon>
        <taxon>BOP clade</taxon>
        <taxon>Oryzoideae</taxon>
        <taxon>Oryzeae</taxon>
        <taxon>Oryzinae</taxon>
        <taxon>Oryza</taxon>
        <taxon>Oryza sativa</taxon>
    </lineage>
</organism>
<keyword id="KW-0010">Activator</keyword>
<keyword id="KW-0238">DNA-binding</keyword>
<keyword id="KW-0539">Nucleus</keyword>
<keyword id="KW-1185">Reference proteome</keyword>
<keyword id="KW-0804">Transcription</keyword>
<keyword id="KW-0805">Transcription regulation</keyword>
<sequence>MEQHEEAAERKPSPPVIFRLFGVEVRGGGGGVDEEEYEEEEVEGGLFIKKSSSMPNLTSIDPLPVPADGGKRRASDDSELASGQQKRRRRKVQERKKGVPWTEEEHKKFLEGLRQLGKGDWRGISKNFVTSRTATQVASHAQKYFLRQTNPGKKKRRASLFDVVAECSDDQLPSPQSVGTKPPTQDIIHTDRGDVPILSYPVARGFRGDSVQVDELTEYVKRLKAAEDMSLSMISGLEMASSSISSLELSIAPPHCAIEAAIKVL</sequence>
<proteinExistence type="evidence at transcript level"/>
<gene>
    <name evidence="5" type="primary">MYBS2</name>
    <name evidence="8" type="ordered locus">LOC_Os10g41260</name>
    <name evidence="9" type="ordered locus">Os10g0562100</name>
    <name evidence="11" type="ORF">OsJ_32468</name>
    <name evidence="7" type="ORF">OSJNBb0089A17.5</name>
    <name evidence="10" type="ORF">OSNPB_100562100</name>
</gene>
<evidence type="ECO:0000255" key="1">
    <source>
        <dbReference type="PROSITE-ProRule" id="PRU00625"/>
    </source>
</evidence>
<evidence type="ECO:0000255" key="2">
    <source>
        <dbReference type="PROSITE-ProRule" id="PRU00768"/>
    </source>
</evidence>
<evidence type="ECO:0000256" key="3">
    <source>
        <dbReference type="SAM" id="MobiDB-lite"/>
    </source>
</evidence>
<evidence type="ECO:0000269" key="4">
    <source>
    </source>
</evidence>
<evidence type="ECO:0000303" key="5">
    <source>
    </source>
</evidence>
<evidence type="ECO:0000305" key="6"/>
<evidence type="ECO:0000312" key="7">
    <source>
        <dbReference type="EMBL" id="AAK31272.1"/>
    </source>
</evidence>
<evidence type="ECO:0000312" key="8">
    <source>
        <dbReference type="EMBL" id="AAP55023.1"/>
    </source>
</evidence>
<evidence type="ECO:0000312" key="9">
    <source>
        <dbReference type="EMBL" id="BAF27229.1"/>
    </source>
</evidence>
<evidence type="ECO:0000312" key="10">
    <source>
        <dbReference type="EMBL" id="BAT12069.1"/>
    </source>
</evidence>
<evidence type="ECO:0000312" key="11">
    <source>
        <dbReference type="EMBL" id="EAZ16983.1"/>
    </source>
</evidence>
<protein>
    <recommendedName>
        <fullName evidence="5">Transcription factor MYBS2</fullName>
    </recommendedName>
    <alternativeName>
        <fullName evidence="5">Myb-related protein S2</fullName>
        <shortName evidence="5">OsMYBS2</shortName>
    </alternativeName>
</protein>
<comment type="function">
    <text evidence="4">Transcription activator that binds to 5'-TATCCA-3' elements in gene promoters. Derepresses weakly the sugar-repressed transcription of promoters containing SRS. Contributes to the sugar-repressed transcription of promoters containing 5'-TATCCA-3' elements.</text>
</comment>
<comment type="subcellular location">
    <subcellularLocation>
        <location evidence="2">Nucleus</location>
    </subcellularLocation>
</comment>
<comment type="tissue specificity">
    <text evidence="4">Expressed mainly in roots, leaves, and senescent leaves at similar levels.</text>
</comment>
<comment type="induction">
    <text evidence="4">Induced by sucrose. Slightly repressed by gibberellic acid (GA).</text>
</comment>
<comment type="sequence caution" evidence="6">
    <conflict type="frameshift">
        <sequence resource="EMBL-CDS" id="AAN63153"/>
    </conflict>
</comment>